<evidence type="ECO:0000250" key="1">
    <source>
        <dbReference type="UniProtKB" id="Q3TYX3"/>
    </source>
</evidence>
<evidence type="ECO:0000255" key="2">
    <source>
        <dbReference type="PROSITE-ProRule" id="PRU00190"/>
    </source>
</evidence>
<evidence type="ECO:0000256" key="3">
    <source>
        <dbReference type="SAM" id="MobiDB-lite"/>
    </source>
</evidence>
<evidence type="ECO:0000269" key="4">
    <source>
    </source>
</evidence>
<evidence type="ECO:0000269" key="5">
    <source>
    </source>
</evidence>
<evidence type="ECO:0000269" key="6">
    <source>
    </source>
</evidence>
<evidence type="ECO:0000303" key="7">
    <source>
    </source>
</evidence>
<evidence type="ECO:0000303" key="8">
    <source>
    </source>
</evidence>
<evidence type="ECO:0000305" key="9"/>
<evidence type="ECO:0000305" key="10">
    <source>
    </source>
</evidence>
<evidence type="ECO:0000312" key="11">
    <source>
        <dbReference type="HGNC" id="HGNC:16258"/>
    </source>
</evidence>
<gene>
    <name evidence="7 11" type="primary">SMYD5</name>
    <name evidence="8" type="synonym">RAI15</name>
</gene>
<feature type="chain" id="PRO_0000227788" description="Protein-lysine N-trimethyltransferase SMYD5">
    <location>
        <begin position="1"/>
        <end position="418"/>
    </location>
</feature>
<feature type="domain" description="SET" evidence="2">
    <location>
        <begin position="21"/>
        <end position="352"/>
    </location>
</feature>
<feature type="zinc finger region" description="MYND-type">
    <location>
        <begin position="98"/>
        <end position="136"/>
    </location>
</feature>
<feature type="region of interest" description="Disordered" evidence="3">
    <location>
        <begin position="385"/>
        <end position="418"/>
    </location>
</feature>
<feature type="binding site" evidence="2 10">
    <location>
        <position position="351"/>
    </location>
    <ligand>
        <name>S-adenosyl-L-methionine</name>
        <dbReference type="ChEBI" id="CHEBI:59789"/>
    </ligand>
</feature>
<feature type="mutagenesis site" description="Abolished trimethylation of 'Lys-22' of the RPL40/eL40 subunit of the 60S ribosome." evidence="5">
    <original>Y</original>
    <variation>A</variation>
    <location>
        <position position="351"/>
    </location>
</feature>
<feature type="sequence conflict" description="In Ref. 3; AAB38131." evidence="9" ref="3">
    <original>D</original>
    <variation>A</variation>
    <location>
        <position position="7"/>
    </location>
</feature>
<feature type="sequence conflict" description="In Ref. 3; AAB38131." evidence="9" ref="3">
    <original>QL</original>
    <variation>HV</variation>
    <location>
        <begin position="280"/>
        <end position="281"/>
    </location>
</feature>
<name>SMYD5_HUMAN</name>
<dbReference type="EC" id="2.1.1.-" evidence="5 6"/>
<dbReference type="EC" id="2.1.1.372" evidence="1"/>
<dbReference type="EC" id="2.1.1.359" evidence="1"/>
<dbReference type="EMBL" id="CH471053">
    <property type="protein sequence ID" value="EAW99744.1"/>
    <property type="molecule type" value="Genomic_DNA"/>
</dbReference>
<dbReference type="EMBL" id="CH471053">
    <property type="protein sequence ID" value="EAW99745.1"/>
    <property type="molecule type" value="Genomic_DNA"/>
</dbReference>
<dbReference type="EMBL" id="BC073806">
    <property type="protein sequence ID" value="AAH73806.1"/>
    <property type="status" value="ALT_INIT"/>
    <property type="molecule type" value="mRNA"/>
</dbReference>
<dbReference type="EMBL" id="U50383">
    <property type="protein sequence ID" value="AAB38131.1"/>
    <property type="molecule type" value="mRNA"/>
</dbReference>
<dbReference type="CCDS" id="CCDS33221.2"/>
<dbReference type="PIR" id="G02453">
    <property type="entry name" value="G02453"/>
</dbReference>
<dbReference type="RefSeq" id="NP_006053.2">
    <property type="nucleotide sequence ID" value="NM_006062.3"/>
</dbReference>
<dbReference type="SMR" id="Q6GMV2"/>
<dbReference type="BioGRID" id="115606">
    <property type="interactions" value="38"/>
</dbReference>
<dbReference type="FunCoup" id="Q6GMV2">
    <property type="interactions" value="507"/>
</dbReference>
<dbReference type="IntAct" id="Q6GMV2">
    <property type="interactions" value="14"/>
</dbReference>
<dbReference type="MINT" id="Q6GMV2"/>
<dbReference type="STRING" id="9606.ENSP00000374152"/>
<dbReference type="GlyGen" id="Q6GMV2">
    <property type="glycosylation" value="1 site, 1 O-linked glycan (1 site)"/>
</dbReference>
<dbReference type="iPTMnet" id="Q6GMV2"/>
<dbReference type="PhosphoSitePlus" id="Q6GMV2"/>
<dbReference type="BioMuta" id="SMYD5"/>
<dbReference type="DMDM" id="90101758"/>
<dbReference type="jPOST" id="Q6GMV2"/>
<dbReference type="MassIVE" id="Q6GMV2"/>
<dbReference type="PaxDb" id="9606-ENSP00000374152"/>
<dbReference type="PeptideAtlas" id="Q6GMV2"/>
<dbReference type="ProteomicsDB" id="66304"/>
<dbReference type="Pumba" id="Q6GMV2"/>
<dbReference type="Antibodypedia" id="31318">
    <property type="antibodies" value="223 antibodies from 26 providers"/>
</dbReference>
<dbReference type="DNASU" id="10322"/>
<dbReference type="Ensembl" id="ENST00000389501.9">
    <property type="protein sequence ID" value="ENSP00000374152.4"/>
    <property type="gene ID" value="ENSG00000135632.12"/>
</dbReference>
<dbReference type="GeneID" id="10322"/>
<dbReference type="KEGG" id="hsa:10322"/>
<dbReference type="MANE-Select" id="ENST00000389501.9">
    <property type="protein sequence ID" value="ENSP00000374152.4"/>
    <property type="RefSeq nucleotide sequence ID" value="NM_006062.3"/>
    <property type="RefSeq protein sequence ID" value="NP_006053.2"/>
</dbReference>
<dbReference type="UCSC" id="uc002siw.3">
    <property type="organism name" value="human"/>
</dbReference>
<dbReference type="AGR" id="HGNC:16258"/>
<dbReference type="CTD" id="10322"/>
<dbReference type="DisGeNET" id="10322"/>
<dbReference type="GeneCards" id="SMYD5"/>
<dbReference type="HGNC" id="HGNC:16258">
    <property type="gene designation" value="SMYD5"/>
</dbReference>
<dbReference type="HPA" id="ENSG00000135632">
    <property type="expression patterns" value="Low tissue specificity"/>
</dbReference>
<dbReference type="MIM" id="619114">
    <property type="type" value="gene"/>
</dbReference>
<dbReference type="neXtProt" id="NX_Q6GMV2"/>
<dbReference type="OpenTargets" id="ENSG00000135632"/>
<dbReference type="PharmGKB" id="PA34190"/>
<dbReference type="VEuPathDB" id="HostDB:ENSG00000135632"/>
<dbReference type="eggNOG" id="KOG2084">
    <property type="taxonomic scope" value="Eukaryota"/>
</dbReference>
<dbReference type="GeneTree" id="ENSGT00510000047420"/>
<dbReference type="HOGENOM" id="CLU_054216_0_0_1"/>
<dbReference type="InParanoid" id="Q6GMV2"/>
<dbReference type="OMA" id="LMAMYQQ"/>
<dbReference type="OrthoDB" id="438641at2759"/>
<dbReference type="PAN-GO" id="Q6GMV2">
    <property type="GO annotations" value="2 GO annotations based on evolutionary models"/>
</dbReference>
<dbReference type="PhylomeDB" id="Q6GMV2"/>
<dbReference type="TreeFam" id="TF106419"/>
<dbReference type="PathwayCommons" id="Q6GMV2"/>
<dbReference type="SignaLink" id="Q6GMV2"/>
<dbReference type="BioGRID-ORCS" id="10322">
    <property type="hits" value="10 hits in 1166 CRISPR screens"/>
</dbReference>
<dbReference type="CD-CODE" id="DEE660B4">
    <property type="entry name" value="Stress granule"/>
</dbReference>
<dbReference type="ChiTaRS" id="SMYD5">
    <property type="organism name" value="human"/>
</dbReference>
<dbReference type="EvolutionaryTrace" id="Q6GMV2"/>
<dbReference type="GenomeRNAi" id="10322"/>
<dbReference type="Pharos" id="Q6GMV2">
    <property type="development level" value="Tbio"/>
</dbReference>
<dbReference type="PRO" id="PR:Q6GMV2"/>
<dbReference type="Proteomes" id="UP000005640">
    <property type="component" value="Chromosome 2"/>
</dbReference>
<dbReference type="RNAct" id="Q6GMV2">
    <property type="molecule type" value="protein"/>
</dbReference>
<dbReference type="Bgee" id="ENSG00000135632">
    <property type="expression patterns" value="Expressed in cortical plate and 127 other cell types or tissues"/>
</dbReference>
<dbReference type="ExpressionAtlas" id="Q6GMV2">
    <property type="expression patterns" value="baseline and differential"/>
</dbReference>
<dbReference type="GO" id="GO:0005737">
    <property type="term" value="C:cytoplasm"/>
    <property type="evidence" value="ECO:0000314"/>
    <property type="project" value="UniProtKB"/>
</dbReference>
<dbReference type="GO" id="GO:0140955">
    <property type="term" value="F:histone H3K36 trimethyltransferase activity"/>
    <property type="evidence" value="ECO:0000250"/>
    <property type="project" value="UniProtKB"/>
</dbReference>
<dbReference type="GO" id="GO:0042799">
    <property type="term" value="F:histone H4K20 methyltransferase activity"/>
    <property type="evidence" value="ECO:0000250"/>
    <property type="project" value="UniProtKB"/>
</dbReference>
<dbReference type="GO" id="GO:0140943">
    <property type="term" value="F:histone H4K20 trimethyltransferase activity"/>
    <property type="evidence" value="ECO:0007669"/>
    <property type="project" value="RHEA"/>
</dbReference>
<dbReference type="GO" id="GO:0016279">
    <property type="term" value="F:protein-lysine N-methyltransferase activity"/>
    <property type="evidence" value="ECO:0000314"/>
    <property type="project" value="UniProtKB"/>
</dbReference>
<dbReference type="GO" id="GO:0008270">
    <property type="term" value="F:zinc ion binding"/>
    <property type="evidence" value="ECO:0007669"/>
    <property type="project" value="UniProtKB-KW"/>
</dbReference>
<dbReference type="GO" id="GO:0032259">
    <property type="term" value="P:methylation"/>
    <property type="evidence" value="ECO:0007669"/>
    <property type="project" value="UniProtKB-KW"/>
</dbReference>
<dbReference type="GO" id="GO:0045814">
    <property type="term" value="P:negative regulation of gene expression, epigenetic"/>
    <property type="evidence" value="ECO:0000250"/>
    <property type="project" value="UniProtKB"/>
</dbReference>
<dbReference type="GO" id="GO:1900249">
    <property type="term" value="P:positive regulation of cytoplasmic translational elongation"/>
    <property type="evidence" value="ECO:0000314"/>
    <property type="project" value="UniProtKB"/>
</dbReference>
<dbReference type="GO" id="GO:2000736">
    <property type="term" value="P:regulation of stem cell differentiation"/>
    <property type="evidence" value="ECO:0000315"/>
    <property type="project" value="UniProtKB"/>
</dbReference>
<dbReference type="GO" id="GO:2000035">
    <property type="term" value="P:regulation of stem cell division"/>
    <property type="evidence" value="ECO:0000250"/>
    <property type="project" value="UniProtKB"/>
</dbReference>
<dbReference type="GO" id="GO:0141005">
    <property type="term" value="P:transposable element silencing by heterochromatin formation"/>
    <property type="evidence" value="ECO:0000315"/>
    <property type="project" value="UniProtKB"/>
</dbReference>
<dbReference type="CDD" id="cd10521">
    <property type="entry name" value="SET_SMYD5"/>
    <property type="match status" value="1"/>
</dbReference>
<dbReference type="FunFam" id="2.170.270.10:FF:000078">
    <property type="entry name" value="SMYD family member 5"/>
    <property type="match status" value="1"/>
</dbReference>
<dbReference type="Gene3D" id="1.10.220.160">
    <property type="match status" value="1"/>
</dbReference>
<dbReference type="Gene3D" id="6.10.140.2220">
    <property type="match status" value="1"/>
</dbReference>
<dbReference type="Gene3D" id="2.170.270.10">
    <property type="entry name" value="SET domain"/>
    <property type="match status" value="2"/>
</dbReference>
<dbReference type="InterPro" id="IPR001214">
    <property type="entry name" value="SET_dom"/>
</dbReference>
<dbReference type="InterPro" id="IPR046341">
    <property type="entry name" value="SET_dom_sf"/>
</dbReference>
<dbReference type="InterPro" id="IPR044422">
    <property type="entry name" value="SMYD5_SET"/>
</dbReference>
<dbReference type="PANTHER" id="PTHR46402:SF2">
    <property type="entry name" value="HISTONE-LYSINE N-TRIMETHYLTRANSFERASE SMYD5"/>
    <property type="match status" value="1"/>
</dbReference>
<dbReference type="PANTHER" id="PTHR46402">
    <property type="entry name" value="SET AND MYND DOMAIN-CONTAINING PROTEIN 5"/>
    <property type="match status" value="1"/>
</dbReference>
<dbReference type="Pfam" id="PF00856">
    <property type="entry name" value="SET"/>
    <property type="match status" value="1"/>
</dbReference>
<dbReference type="SMART" id="SM00317">
    <property type="entry name" value="SET"/>
    <property type="match status" value="1"/>
</dbReference>
<dbReference type="SUPFAM" id="SSF82199">
    <property type="entry name" value="SET domain"/>
    <property type="match status" value="1"/>
</dbReference>
<dbReference type="PROSITE" id="PS50280">
    <property type="entry name" value="SET"/>
    <property type="match status" value="1"/>
</dbReference>
<reference key="1">
    <citation type="submission" date="2005-09" db="EMBL/GenBank/DDBJ databases">
        <authorList>
            <person name="Mural R.J."/>
            <person name="Istrail S."/>
            <person name="Sutton G.G."/>
            <person name="Florea L."/>
            <person name="Halpern A.L."/>
            <person name="Mobarry C.M."/>
            <person name="Lippert R."/>
            <person name="Walenz B."/>
            <person name="Shatkay H."/>
            <person name="Dew I."/>
            <person name="Miller J.R."/>
            <person name="Flanigan M.J."/>
            <person name="Edwards N.J."/>
            <person name="Bolanos R."/>
            <person name="Fasulo D."/>
            <person name="Halldorsson B.V."/>
            <person name="Hannenhalli S."/>
            <person name="Turner R."/>
            <person name="Yooseph S."/>
            <person name="Lu F."/>
            <person name="Nusskern D.R."/>
            <person name="Shue B.C."/>
            <person name="Zheng X.H."/>
            <person name="Zhong F."/>
            <person name="Delcher A.L."/>
            <person name="Huson D.H."/>
            <person name="Kravitz S.A."/>
            <person name="Mouchard L."/>
            <person name="Reinert K."/>
            <person name="Remington K.A."/>
            <person name="Clark A.G."/>
            <person name="Waterman M.S."/>
            <person name="Eichler E.E."/>
            <person name="Adams M.D."/>
            <person name="Hunkapiller M.W."/>
            <person name="Myers E.W."/>
            <person name="Venter J.C."/>
        </authorList>
    </citation>
    <scope>NUCLEOTIDE SEQUENCE [LARGE SCALE GENOMIC DNA]</scope>
</reference>
<reference key="2">
    <citation type="journal article" date="2004" name="Genome Res.">
        <title>The status, quality, and expansion of the NIH full-length cDNA project: the Mammalian Gene Collection (MGC).</title>
        <authorList>
            <consortium name="The MGC Project Team"/>
        </authorList>
    </citation>
    <scope>NUCLEOTIDE SEQUENCE [LARGE SCALE MRNA]</scope>
    <source>
        <tissue>Ovary</tissue>
    </source>
</reference>
<reference key="3">
    <citation type="journal article" date="1996" name="Mol. Cell. Biol.">
        <title>Isolation of a novel retinoic acid-responsive gene by selection of genomic fragments derived from CpG-island-enriched DNA.</title>
        <authorList>
            <person name="Shago M."/>
            <person name="Giguere V."/>
        </authorList>
    </citation>
    <scope>NUCLEOTIDE SEQUENCE [MRNA] OF 7-418</scope>
    <source>
        <tissue>Brain</tissue>
    </source>
</reference>
<reference key="4">
    <citation type="journal article" date="2011" name="BMC Syst. Biol.">
        <title>Initial characterization of the human central proteome.</title>
        <authorList>
            <person name="Burkard T.R."/>
            <person name="Planyavsky M."/>
            <person name="Kaupe I."/>
            <person name="Breitwieser F.P."/>
            <person name="Buerckstuemmer T."/>
            <person name="Bennett K.L."/>
            <person name="Superti-Furga G."/>
            <person name="Colinge J."/>
        </authorList>
    </citation>
    <scope>IDENTIFICATION BY MASS SPECTROMETRY [LARGE SCALE ANALYSIS]</scope>
</reference>
<reference key="5">
    <citation type="journal article" date="2017" name="Cancer Res.">
        <title>SMYD5 Controls Heterochromatin and Chromosome Integrity during Embryonic Stem Cell Differentiation.</title>
        <authorList>
            <person name="Kidder B.L."/>
            <person name="He R."/>
            <person name="Wangsa D."/>
            <person name="Padilla-Nash H.M."/>
            <person name="Bernardo M.M."/>
            <person name="Sheng S."/>
            <person name="Ried T."/>
            <person name="Zhao K."/>
        </authorList>
    </citation>
    <scope>FUNCTION</scope>
</reference>
<reference key="6">
    <citation type="journal article" date="2024" name="Cell Res.">
        <title>SMYD5 is a ribosomal methyltransferase that catalyzes RPL40 lysine methylation to enhance translation output and promote hepatocellular carcinoma.</title>
        <authorList>
            <person name="Miao B."/>
            <person name="Ge L."/>
            <person name="He C."/>
            <person name="Wang X."/>
            <person name="Wu J."/>
            <person name="Li X."/>
            <person name="Chen K."/>
            <person name="Wan J."/>
            <person name="Xing S."/>
            <person name="Ren L."/>
            <person name="Shi Z."/>
            <person name="Liu S."/>
            <person name="Hu Y."/>
            <person name="Chen J."/>
            <person name="Yu Y."/>
            <person name="Feng L."/>
            <person name="Flores N.M."/>
            <person name="Liang Z."/>
            <person name="Xu X."/>
            <person name="Wang R."/>
            <person name="Zhou J."/>
            <person name="Fan J."/>
            <person name="Xiang B."/>
            <person name="Li E."/>
            <person name="Mao Y."/>
            <person name="Cheng J."/>
            <person name="Zhao K."/>
            <person name="Mazur P.K."/>
            <person name="Cai J."/>
            <person name="Lan F."/>
        </authorList>
    </citation>
    <scope>FUNCTION</scope>
    <scope>CATALYTIC ACTIVITY</scope>
    <scope>SUBCELLULAR LOCATION</scope>
    <scope>INDUCTION</scope>
</reference>
<reference key="7">
    <citation type="journal article" date="2024" name="Nature">
        <title>SMYD5 methylation of rpL40 links ribosomal output to gastric cancer.</title>
        <authorList>
            <person name="Park J."/>
            <person name="Wu J."/>
            <person name="Szkop K.J."/>
            <person name="Jeong J."/>
            <person name="Jovanovic P."/>
            <person name="Husmann D."/>
            <person name="Flores N.M."/>
            <person name="Francis J.W."/>
            <person name="Chen Y.C."/>
            <person name="Benitez A.M."/>
            <person name="Zahn E."/>
            <person name="Song S."/>
            <person name="Ajani J.A."/>
            <person name="Wang L."/>
            <person name="Singh K."/>
            <person name="Larsson O."/>
            <person name="Garcia B.A."/>
            <person name="Topisirovic I."/>
            <person name="Gozani O."/>
            <person name="Mazur P.K."/>
        </authorList>
    </citation>
    <scope>FUNCTION</scope>
    <scope>CATALYTIC ACTIVITY</scope>
    <scope>SUBCELLULAR LOCATION</scope>
    <scope>INDUCTION</scope>
    <scope>MUTAGENESIS OF TYR-351</scope>
</reference>
<accession>Q6GMV2</accession>
<accession>D6W5H3</accession>
<accession>Q13558</accession>
<protein>
    <recommendedName>
        <fullName evidence="9">Protein-lysine N-trimethyltransferase SMYD5</fullName>
        <ecNumber evidence="5 6">2.1.1.-</ecNumber>
    </recommendedName>
    <alternativeName>
        <fullName>Protein NN8-4AG</fullName>
    </alternativeName>
    <alternativeName>
        <fullName evidence="8">Retinoic acid-induced protein 15</fullName>
    </alternativeName>
    <alternativeName>
        <fullName evidence="7">SET and MYND domain-containing protein 5</fullName>
    </alternativeName>
    <alternativeName>
        <fullName>[histone H3]-lysine20 N-trimethyltransferase SMYD5</fullName>
        <ecNumber evidence="1">2.1.1.372</ecNumber>
    </alternativeName>
    <alternativeName>
        <fullName>[histone H4]-lysine36 N-trimethyltransferase SMYD5</fullName>
        <ecNumber evidence="1">2.1.1.359</ecNumber>
    </alternativeName>
</protein>
<sequence length="418" mass="47341">MAASMCDVFSFCVGVAGRARVSVEVRFVSSAKGKGLFATQLIRKGETIFVERPLVAAQFLWNALYRYRACDHCLRALEKAEENAQRLTGKPGQVLPHPELCTVRKDLHQNCPHCQVMYCSAECRLAATEQYHQVLCPGPSQDDPLHPLNKLQEAWRSIHYPPETASIMLMARMVATVKQAKDKDRWIRLFSQFCNKTANEEEEIVHKLLGDKFKGQLELLRRLFTEALYEEAVSQWFTPDGFRSLFALVGTNGQGIGTSSLSQWVHACDTLELKPQDREQLDAFIDQLYKDIEAATGEFLNCEGSGLFVLQSCCNHSCVPNAETSFPENNFLLHVTALEDIKPGEEICISYLDCCQRERSRHSRHKILRENYLFVCSCPKCLAEADEPNVTSEEEEEEEEEEEGEPEDAELGDEMTDV</sequence>
<keyword id="KW-0963">Cytoplasm</keyword>
<keyword id="KW-0479">Metal-binding</keyword>
<keyword id="KW-0489">Methyltransferase</keyword>
<keyword id="KW-1267">Proteomics identification</keyword>
<keyword id="KW-1185">Reference proteome</keyword>
<keyword id="KW-0949">S-adenosyl-L-methionine</keyword>
<keyword id="KW-0808">Transferase</keyword>
<keyword id="KW-0832">Ubl conjugation</keyword>
<keyword id="KW-0862">Zinc</keyword>
<keyword id="KW-0863">Zinc-finger</keyword>
<organism>
    <name type="scientific">Homo sapiens</name>
    <name type="common">Human</name>
    <dbReference type="NCBI Taxonomy" id="9606"/>
    <lineage>
        <taxon>Eukaryota</taxon>
        <taxon>Metazoa</taxon>
        <taxon>Chordata</taxon>
        <taxon>Craniata</taxon>
        <taxon>Vertebrata</taxon>
        <taxon>Euteleostomi</taxon>
        <taxon>Mammalia</taxon>
        <taxon>Eutheria</taxon>
        <taxon>Euarchontoglires</taxon>
        <taxon>Primates</taxon>
        <taxon>Haplorrhini</taxon>
        <taxon>Catarrhini</taxon>
        <taxon>Hominidae</taxon>
        <taxon>Homo</taxon>
    </lineage>
</organism>
<comment type="function">
    <text evidence="1 4 5 6">Protein-lysine N-trimethyltransferase that specifically catalyzes trimethylation of 'Lys-22' of the RPL40/eL40 subunit of the 60S ribosome, thereby promoting translation elongation and protein synthesis (PubMed:39048817, PubMed:39103523). May also act as a histone methyltransferase in the context of histone octamers, but not on nucleosome substrates: trimethylates 'Lys-36' of histone H3 and 'Lys-20' of histone H4 to form H3K36me3 and H4K20me3, respectively (By similarity). The histone methyltransferase activity, which is independent of its SET domain, is however unsure in vivo (PubMed:39048817, PubMed:39103523). In association with the NCoR corepressor complex, involved in the repression of toll-like receptor 4 (TLR4)-target inflammatory genes in macrophages, possibly by catalyzing the formation of H4K20me3 at the gene promoters (By similarity). Plays an important role in embryonic stem (ES) cell self-renewal and differentiation (By similarity). Maintains genome stability of ES cells during differentiation through regulation of heterochromatin formation and repression of endogenous repetitive DNA elements by promoting H4K20me3 marks (PubMed:28951459). Acts as a regulator of the hypothermia response: its degradation in response to mild hypothermia relieves the formation of H3K36me3 at gene promoters, allowing expression of the neuroprotective gene SP1 (By similarity).</text>
</comment>
<comment type="catalytic activity">
    <reaction evidence="5 6">
        <text>L-lysyl-[protein] + 3 S-adenosyl-L-methionine = N(6),N(6),N(6)-trimethyl-L-lysyl-[protein] + 3 S-adenosyl-L-homocysteine + 3 H(+)</text>
        <dbReference type="Rhea" id="RHEA:54192"/>
        <dbReference type="Rhea" id="RHEA-COMP:9752"/>
        <dbReference type="Rhea" id="RHEA-COMP:13826"/>
        <dbReference type="ChEBI" id="CHEBI:15378"/>
        <dbReference type="ChEBI" id="CHEBI:29969"/>
        <dbReference type="ChEBI" id="CHEBI:57856"/>
        <dbReference type="ChEBI" id="CHEBI:59789"/>
        <dbReference type="ChEBI" id="CHEBI:61961"/>
    </reaction>
    <physiologicalReaction direction="left-to-right" evidence="5 6">
        <dbReference type="Rhea" id="RHEA:54193"/>
    </physiologicalReaction>
</comment>
<comment type="catalytic activity">
    <reaction evidence="1">
        <text>L-lysyl(20)-[histone H4] + 3 S-adenosyl-L-methionine = N(6),N(6),N(6)-trimethyl-L-lysyl(20)-[histone H4] + 3 S-adenosyl-L-homocysteine + 3 H(+)</text>
        <dbReference type="Rhea" id="RHEA:64456"/>
        <dbReference type="Rhea" id="RHEA-COMP:15554"/>
        <dbReference type="Rhea" id="RHEA-COMP:15998"/>
        <dbReference type="ChEBI" id="CHEBI:15378"/>
        <dbReference type="ChEBI" id="CHEBI:29969"/>
        <dbReference type="ChEBI" id="CHEBI:57856"/>
        <dbReference type="ChEBI" id="CHEBI:59789"/>
        <dbReference type="ChEBI" id="CHEBI:61961"/>
        <dbReference type="EC" id="2.1.1.372"/>
    </reaction>
</comment>
<comment type="catalytic activity">
    <reaction evidence="1">
        <text>L-lysyl(36)-[histone H3] + 3 S-adenosyl-L-methionine = N(6),N(6),N(6)-trimethyl-L-lysyl(36)-[histone H3] + 3 S-adenosyl-L-homocysteine + 3 H(+)</text>
        <dbReference type="Rhea" id="RHEA:60324"/>
        <dbReference type="Rhea" id="RHEA-COMP:9785"/>
        <dbReference type="Rhea" id="RHEA-COMP:15536"/>
        <dbReference type="ChEBI" id="CHEBI:15378"/>
        <dbReference type="ChEBI" id="CHEBI:29969"/>
        <dbReference type="ChEBI" id="CHEBI:57856"/>
        <dbReference type="ChEBI" id="CHEBI:59789"/>
        <dbReference type="ChEBI" id="CHEBI:61961"/>
        <dbReference type="EC" id="2.1.1.359"/>
    </reaction>
</comment>
<comment type="subunit">
    <text evidence="1">Interacts with the N-CoR complex (By similarity). Interacts with EHMT2 and CBX5 (By similarity).</text>
</comment>
<comment type="interaction">
    <interactant intactId="EBI-11057552">
        <id>Q6GMV2</id>
    </interactant>
    <interactant intactId="EBI-740727">
        <id>Q8TAU3</id>
        <label>ZNF417</label>
    </interactant>
    <organismsDiffer>false</organismsDiffer>
    <experiments>3</experiments>
</comment>
<comment type="interaction">
    <interactant intactId="EBI-11057552">
        <id>Q6GMV2</id>
    </interactant>
    <interactant intactId="EBI-6427977">
        <id>Q96SQ5</id>
        <label>ZNF587</label>
    </interactant>
    <organismsDiffer>false</organismsDiffer>
    <experiments>3</experiments>
</comment>
<comment type="interaction">
    <interactant intactId="EBI-11057552">
        <id>Q6GMV2</id>
    </interactant>
    <interactant intactId="EBI-1371053">
        <id>O70343</id>
        <label>Ppargc1a</label>
    </interactant>
    <organismsDiffer>true</organismsDiffer>
    <experiments>4</experiments>
</comment>
<comment type="subcellular location">
    <subcellularLocation>
        <location evidence="5 6">Cytoplasm</location>
    </subcellularLocation>
</comment>
<comment type="induction">
    <text evidence="5 6">Strongly up-regulated in gastric adenocarcinomas and hepatocellular carcinomas, driving malignant progression.</text>
</comment>
<comment type="PTM">
    <text evidence="1">Ubiquitinated and degradaed by the proteasome in response to mild hypothermia (32 degrees Celsius), relieving repression of the SP1 gene.</text>
</comment>
<comment type="miscellaneous">
    <text evidence="5 6">Acts as a strong promoter of malignant progression of gastric adenocarcinoma and hepatocellular carcinoma via its ability to mediate trimethylation of 'Lys-22' of the RPL40/eL40 subunit of the 60S ribosome and increase protein synthesis (PubMed:39048817, PubMed:39103523). SMYD5 inhibition significantly decreases cancer progression, and renders cancer cells hypersensitive to inhibitors of PI3K and mTOR (PubMed:39048817, PubMed:39103523).</text>
</comment>
<comment type="similarity">
    <text evidence="2">Belongs to the class V-like SAM-binding methyltransferase superfamily.</text>
</comment>
<comment type="sequence caution" evidence="9">
    <conflict type="erroneous initiation">
        <sequence resource="EMBL-CDS" id="AAH73806"/>
    </conflict>
</comment>
<proteinExistence type="evidence at protein level"/>